<comment type="catalytic activity">
    <reaction evidence="1">
        <text>GTP + H2O = 7,8-dihydroneopterin 3'-triphosphate + formate + H(+)</text>
        <dbReference type="Rhea" id="RHEA:17473"/>
        <dbReference type="ChEBI" id="CHEBI:15377"/>
        <dbReference type="ChEBI" id="CHEBI:15378"/>
        <dbReference type="ChEBI" id="CHEBI:15740"/>
        <dbReference type="ChEBI" id="CHEBI:37565"/>
        <dbReference type="ChEBI" id="CHEBI:58462"/>
        <dbReference type="EC" id="3.5.4.16"/>
    </reaction>
</comment>
<comment type="pathway">
    <text evidence="1">Cofactor biosynthesis; 7,8-dihydroneopterin triphosphate biosynthesis; 7,8-dihydroneopterin triphosphate from GTP: step 1/1.</text>
</comment>
<comment type="subunit">
    <text evidence="1">Homomer.</text>
</comment>
<comment type="similarity">
    <text evidence="1">Belongs to the GTP cyclohydrolase I family.</text>
</comment>
<protein>
    <recommendedName>
        <fullName evidence="1">GTP cyclohydrolase 1</fullName>
        <ecNumber evidence="1">3.5.4.16</ecNumber>
    </recommendedName>
    <alternativeName>
        <fullName evidence="1">GTP cyclohydrolase I</fullName>
        <shortName evidence="1">GTP-CH-I</shortName>
    </alternativeName>
</protein>
<organism>
    <name type="scientific">Xylella fastidiosa (strain M23)</name>
    <dbReference type="NCBI Taxonomy" id="405441"/>
    <lineage>
        <taxon>Bacteria</taxon>
        <taxon>Pseudomonadati</taxon>
        <taxon>Pseudomonadota</taxon>
        <taxon>Gammaproteobacteria</taxon>
        <taxon>Lysobacterales</taxon>
        <taxon>Lysobacteraceae</taxon>
        <taxon>Xylella</taxon>
    </lineage>
</organism>
<keyword id="KW-0342">GTP-binding</keyword>
<keyword id="KW-0378">Hydrolase</keyword>
<keyword id="KW-0479">Metal-binding</keyword>
<keyword id="KW-0547">Nucleotide-binding</keyword>
<keyword id="KW-0554">One-carbon metabolism</keyword>
<keyword id="KW-0862">Zinc</keyword>
<evidence type="ECO:0000255" key="1">
    <source>
        <dbReference type="HAMAP-Rule" id="MF_00223"/>
    </source>
</evidence>
<feature type="chain" id="PRO_1000100210" description="GTP cyclohydrolase 1">
    <location>
        <begin position="1"/>
        <end position="203"/>
    </location>
</feature>
<feature type="binding site" evidence="1">
    <location>
        <position position="87"/>
    </location>
    <ligand>
        <name>Zn(2+)</name>
        <dbReference type="ChEBI" id="CHEBI:29105"/>
    </ligand>
</feature>
<feature type="binding site" evidence="1">
    <location>
        <position position="90"/>
    </location>
    <ligand>
        <name>Zn(2+)</name>
        <dbReference type="ChEBI" id="CHEBI:29105"/>
    </ligand>
</feature>
<feature type="binding site" evidence="1">
    <location>
        <position position="158"/>
    </location>
    <ligand>
        <name>Zn(2+)</name>
        <dbReference type="ChEBI" id="CHEBI:29105"/>
    </ligand>
</feature>
<sequence length="203" mass="22983">MDHSKQQNASITQAQAEEAVRTLLRWAGEDPTREGLLDTPRRVVEAYGDWFSGYREDPHDYLQRTFEEISCYDEMIVLRNITYESHCEHHMAPIIGKVHVGYLPNGKVVGISKLARVVESYARRFQIQEKMTAQIAACIQDTLTPRGVGVVIEGAHACMTTRGIHKRGVSMVTSKMLGTFREDARTRAEFLQFIEVGTNVIDL</sequence>
<dbReference type="EC" id="3.5.4.16" evidence="1"/>
<dbReference type="EMBL" id="CP001011">
    <property type="protein sequence ID" value="ACB92307.1"/>
    <property type="molecule type" value="Genomic_DNA"/>
</dbReference>
<dbReference type="RefSeq" id="WP_004091133.1">
    <property type="nucleotide sequence ID" value="NC_010577.1"/>
</dbReference>
<dbReference type="SMR" id="B2I4L2"/>
<dbReference type="GeneID" id="93904610"/>
<dbReference type="KEGG" id="xfn:XfasM23_0871"/>
<dbReference type="HOGENOM" id="CLU_049768_3_1_6"/>
<dbReference type="UniPathway" id="UPA00848">
    <property type="reaction ID" value="UER00151"/>
</dbReference>
<dbReference type="Proteomes" id="UP000001698">
    <property type="component" value="Chromosome"/>
</dbReference>
<dbReference type="GO" id="GO:0005737">
    <property type="term" value="C:cytoplasm"/>
    <property type="evidence" value="ECO:0007669"/>
    <property type="project" value="TreeGrafter"/>
</dbReference>
<dbReference type="GO" id="GO:0005525">
    <property type="term" value="F:GTP binding"/>
    <property type="evidence" value="ECO:0007669"/>
    <property type="project" value="UniProtKB-KW"/>
</dbReference>
<dbReference type="GO" id="GO:0003934">
    <property type="term" value="F:GTP cyclohydrolase I activity"/>
    <property type="evidence" value="ECO:0007669"/>
    <property type="project" value="UniProtKB-UniRule"/>
</dbReference>
<dbReference type="GO" id="GO:0008270">
    <property type="term" value="F:zinc ion binding"/>
    <property type="evidence" value="ECO:0007669"/>
    <property type="project" value="UniProtKB-UniRule"/>
</dbReference>
<dbReference type="GO" id="GO:0006730">
    <property type="term" value="P:one-carbon metabolic process"/>
    <property type="evidence" value="ECO:0007669"/>
    <property type="project" value="UniProtKB-UniRule"/>
</dbReference>
<dbReference type="GO" id="GO:0006729">
    <property type="term" value="P:tetrahydrobiopterin biosynthetic process"/>
    <property type="evidence" value="ECO:0007669"/>
    <property type="project" value="TreeGrafter"/>
</dbReference>
<dbReference type="GO" id="GO:0046654">
    <property type="term" value="P:tetrahydrofolate biosynthetic process"/>
    <property type="evidence" value="ECO:0007669"/>
    <property type="project" value="UniProtKB-UniRule"/>
</dbReference>
<dbReference type="FunFam" id="1.10.286.10:FF:000001">
    <property type="entry name" value="GTP cyclohydrolase 1"/>
    <property type="match status" value="1"/>
</dbReference>
<dbReference type="FunFam" id="3.30.1130.10:FF:000001">
    <property type="entry name" value="GTP cyclohydrolase 1"/>
    <property type="match status" value="1"/>
</dbReference>
<dbReference type="Gene3D" id="1.10.286.10">
    <property type="match status" value="1"/>
</dbReference>
<dbReference type="Gene3D" id="3.30.1130.10">
    <property type="match status" value="1"/>
</dbReference>
<dbReference type="HAMAP" id="MF_00223">
    <property type="entry name" value="FolE"/>
    <property type="match status" value="1"/>
</dbReference>
<dbReference type="InterPro" id="IPR043133">
    <property type="entry name" value="GTP-CH-I_C/QueF"/>
</dbReference>
<dbReference type="InterPro" id="IPR043134">
    <property type="entry name" value="GTP-CH-I_N"/>
</dbReference>
<dbReference type="InterPro" id="IPR001474">
    <property type="entry name" value="GTP_CycHdrlase_I"/>
</dbReference>
<dbReference type="InterPro" id="IPR018234">
    <property type="entry name" value="GTP_CycHdrlase_I_CS"/>
</dbReference>
<dbReference type="InterPro" id="IPR020602">
    <property type="entry name" value="GTP_CycHdrlase_I_dom"/>
</dbReference>
<dbReference type="NCBIfam" id="TIGR00063">
    <property type="entry name" value="folE"/>
    <property type="match status" value="1"/>
</dbReference>
<dbReference type="NCBIfam" id="NF006825">
    <property type="entry name" value="PRK09347.1-2"/>
    <property type="match status" value="1"/>
</dbReference>
<dbReference type="NCBIfam" id="NF006826">
    <property type="entry name" value="PRK09347.1-3"/>
    <property type="match status" value="1"/>
</dbReference>
<dbReference type="PANTHER" id="PTHR11109:SF7">
    <property type="entry name" value="GTP CYCLOHYDROLASE 1"/>
    <property type="match status" value="1"/>
</dbReference>
<dbReference type="PANTHER" id="PTHR11109">
    <property type="entry name" value="GTP CYCLOHYDROLASE I"/>
    <property type="match status" value="1"/>
</dbReference>
<dbReference type="Pfam" id="PF01227">
    <property type="entry name" value="GTP_cyclohydroI"/>
    <property type="match status" value="1"/>
</dbReference>
<dbReference type="SUPFAM" id="SSF55620">
    <property type="entry name" value="Tetrahydrobiopterin biosynthesis enzymes-like"/>
    <property type="match status" value="1"/>
</dbReference>
<dbReference type="PROSITE" id="PS00859">
    <property type="entry name" value="GTP_CYCLOHYDROL_1_1"/>
    <property type="match status" value="1"/>
</dbReference>
<dbReference type="PROSITE" id="PS00860">
    <property type="entry name" value="GTP_CYCLOHYDROL_1_2"/>
    <property type="match status" value="1"/>
</dbReference>
<gene>
    <name evidence="1" type="primary">folE</name>
    <name type="ordered locus">XfasM23_0871</name>
</gene>
<proteinExistence type="inferred from homology"/>
<reference key="1">
    <citation type="journal article" date="2010" name="J. Bacteriol.">
        <title>Whole genome sequences of two Xylella fastidiosa strains (M12 and M23) causing almond leaf scorch disease in California.</title>
        <authorList>
            <person name="Chen J."/>
            <person name="Xie G."/>
            <person name="Han S."/>
            <person name="Chertkov O."/>
            <person name="Sims D."/>
            <person name="Civerolo E.L."/>
        </authorList>
    </citation>
    <scope>NUCLEOTIDE SEQUENCE [LARGE SCALE GENOMIC DNA]</scope>
    <source>
        <strain>M23</strain>
    </source>
</reference>
<accession>B2I4L2</accession>
<name>GCH1_XYLF2</name>